<organism>
    <name type="scientific">Mycobacterium tuberculosis (strain ATCC 25618 / H37Rv)</name>
    <dbReference type="NCBI Taxonomy" id="83332"/>
    <lineage>
        <taxon>Bacteria</taxon>
        <taxon>Bacillati</taxon>
        <taxon>Actinomycetota</taxon>
        <taxon>Actinomycetes</taxon>
        <taxon>Mycobacteriales</taxon>
        <taxon>Mycobacteriaceae</taxon>
        <taxon>Mycobacterium</taxon>
        <taxon>Mycobacterium tuberculosis complex</taxon>
    </lineage>
</organism>
<gene>
    <name evidence="1" type="primary">vapC30</name>
    <name type="ordered locus">Rv0624</name>
    <name type="ORF">MTCY20H10.05</name>
</gene>
<proteinExistence type="evidence at protein level"/>
<sequence length="131" mass="14250">MVIDTSALVAMLSDEPDAERFEAAVEADHIRLMSTASYLETALVIEARFGEPGGRELDLWLHRAAVDLVAVHADQADAARAAYRTYGKGRHRAGLNYGDCFSYGLAKISGQPLLFKGEDFQHTDIATVALP</sequence>
<keyword id="KW-0002">3D-structure</keyword>
<keyword id="KW-0378">Hydrolase</keyword>
<keyword id="KW-0460">Magnesium</keyword>
<keyword id="KW-0479">Metal-binding</keyword>
<keyword id="KW-0540">Nuclease</keyword>
<keyword id="KW-1185">Reference proteome</keyword>
<keyword id="KW-1277">Toxin-antitoxin system</keyword>
<name>VPC30_MYCTU</name>
<protein>
    <recommendedName>
        <fullName evidence="1">Ribonuclease VapC30</fullName>
        <shortName evidence="1">RNase VapC30</shortName>
        <ecNumber evidence="1">3.1.-.-</ecNumber>
    </recommendedName>
    <alternativeName>
        <fullName evidence="1">Toxin VapC30</fullName>
    </alternativeName>
</protein>
<evidence type="ECO:0000255" key="1">
    <source>
        <dbReference type="HAMAP-Rule" id="MF_00265"/>
    </source>
</evidence>
<evidence type="ECO:0000269" key="2">
    <source>
    </source>
</evidence>
<evidence type="ECO:0007829" key="3">
    <source>
        <dbReference type="PDB" id="4XGQ"/>
    </source>
</evidence>
<dbReference type="EC" id="3.1.-.-" evidence="1"/>
<dbReference type="EMBL" id="AL123456">
    <property type="protein sequence ID" value="CCP43365.1"/>
    <property type="molecule type" value="Genomic_DNA"/>
</dbReference>
<dbReference type="PIR" id="E70611">
    <property type="entry name" value="E70611"/>
</dbReference>
<dbReference type="RefSeq" id="NP_215138.1">
    <property type="nucleotide sequence ID" value="NC_000962.3"/>
</dbReference>
<dbReference type="RefSeq" id="WP_003403236.1">
    <property type="nucleotide sequence ID" value="NZ_NVQJ01000033.1"/>
</dbReference>
<dbReference type="PDB" id="4XGQ">
    <property type="method" value="X-ray"/>
    <property type="resolution" value="2.70 A"/>
    <property type="chains" value="A/C/E/G=1-131"/>
</dbReference>
<dbReference type="PDB" id="4XGR">
    <property type="method" value="X-ray"/>
    <property type="resolution" value="2.70 A"/>
    <property type="chains" value="A/C/E/G=1-131"/>
</dbReference>
<dbReference type="PDBsum" id="4XGQ"/>
<dbReference type="PDBsum" id="4XGR"/>
<dbReference type="SMR" id="P9WF77"/>
<dbReference type="STRING" id="83332.Rv0624"/>
<dbReference type="PaxDb" id="83332-Rv0624"/>
<dbReference type="DNASU" id="887951"/>
<dbReference type="GeneID" id="887951"/>
<dbReference type="KEGG" id="mtu:Rv0624"/>
<dbReference type="KEGG" id="mtv:RVBD_0624"/>
<dbReference type="TubercuList" id="Rv0624"/>
<dbReference type="eggNOG" id="COG3742">
    <property type="taxonomic scope" value="Bacteria"/>
</dbReference>
<dbReference type="InParanoid" id="P9WF77"/>
<dbReference type="OrthoDB" id="32625at2"/>
<dbReference type="PhylomeDB" id="P9WF77"/>
<dbReference type="EvolutionaryTrace" id="P9WF77"/>
<dbReference type="Proteomes" id="UP000001584">
    <property type="component" value="Chromosome"/>
</dbReference>
<dbReference type="GO" id="GO:0000287">
    <property type="term" value="F:magnesium ion binding"/>
    <property type="evidence" value="ECO:0007669"/>
    <property type="project" value="UniProtKB-UniRule"/>
</dbReference>
<dbReference type="GO" id="GO:0004540">
    <property type="term" value="F:RNA nuclease activity"/>
    <property type="evidence" value="ECO:0007669"/>
    <property type="project" value="InterPro"/>
</dbReference>
<dbReference type="GO" id="GO:0045926">
    <property type="term" value="P:negative regulation of growth"/>
    <property type="evidence" value="ECO:0000315"/>
    <property type="project" value="MTBBASE"/>
</dbReference>
<dbReference type="CDD" id="cd09871">
    <property type="entry name" value="PIN_MtVapC28-VapC30-like"/>
    <property type="match status" value="1"/>
</dbReference>
<dbReference type="Gene3D" id="3.40.50.1010">
    <property type="entry name" value="5'-nuclease"/>
    <property type="match status" value="1"/>
</dbReference>
<dbReference type="HAMAP" id="MF_00265">
    <property type="entry name" value="VapC_Nob1"/>
    <property type="match status" value="1"/>
</dbReference>
<dbReference type="InterPro" id="IPR029060">
    <property type="entry name" value="PIN-like_dom_sf"/>
</dbReference>
<dbReference type="InterPro" id="IPR002716">
    <property type="entry name" value="PIN_dom"/>
</dbReference>
<dbReference type="InterPro" id="IPR050556">
    <property type="entry name" value="Type_II_TA_system_RNase"/>
</dbReference>
<dbReference type="InterPro" id="IPR022907">
    <property type="entry name" value="VapC_family"/>
</dbReference>
<dbReference type="PANTHER" id="PTHR33653">
    <property type="entry name" value="RIBONUCLEASE VAPC2"/>
    <property type="match status" value="1"/>
</dbReference>
<dbReference type="PANTHER" id="PTHR33653:SF1">
    <property type="entry name" value="RIBONUCLEASE VAPC2"/>
    <property type="match status" value="1"/>
</dbReference>
<dbReference type="Pfam" id="PF01850">
    <property type="entry name" value="PIN"/>
    <property type="match status" value="1"/>
</dbReference>
<dbReference type="SUPFAM" id="SSF88723">
    <property type="entry name" value="PIN domain-like"/>
    <property type="match status" value="1"/>
</dbReference>
<accession>P9WF77</accession>
<accession>L0T4A1</accession>
<accession>P67240</accession>
<accession>P96914</accession>
<feature type="chain" id="PRO_0000221199" description="Ribonuclease VapC30">
    <location>
        <begin position="1"/>
        <end position="131"/>
    </location>
</feature>
<feature type="domain" description="PINc" evidence="1">
    <location>
        <begin position="1"/>
        <end position="129"/>
    </location>
</feature>
<feature type="binding site" evidence="1">
    <location>
        <position position="4"/>
    </location>
    <ligand>
        <name>Mg(2+)</name>
        <dbReference type="ChEBI" id="CHEBI:18420"/>
    </ligand>
</feature>
<feature type="binding site" evidence="1">
    <location>
        <position position="99"/>
    </location>
    <ligand>
        <name>Mg(2+)</name>
        <dbReference type="ChEBI" id="CHEBI:18420"/>
    </ligand>
</feature>
<feature type="strand" evidence="3">
    <location>
        <begin position="1"/>
        <end position="3"/>
    </location>
</feature>
<feature type="helix" evidence="3">
    <location>
        <begin position="5"/>
        <end position="13"/>
    </location>
</feature>
<feature type="helix" evidence="3">
    <location>
        <begin position="18"/>
        <end position="27"/>
    </location>
</feature>
<feature type="strand" evidence="3">
    <location>
        <begin position="31"/>
        <end position="34"/>
    </location>
</feature>
<feature type="helix" evidence="3">
    <location>
        <begin position="35"/>
        <end position="48"/>
    </location>
</feature>
<feature type="helix" evidence="3">
    <location>
        <begin position="50"/>
        <end position="63"/>
    </location>
</feature>
<feature type="strand" evidence="3">
    <location>
        <begin position="67"/>
        <end position="69"/>
    </location>
</feature>
<feature type="helix" evidence="3">
    <location>
        <begin position="73"/>
        <end position="86"/>
    </location>
</feature>
<feature type="helix" evidence="3">
    <location>
        <begin position="99"/>
        <end position="109"/>
    </location>
</feature>
<feature type="strand" evidence="3">
    <location>
        <begin position="121"/>
        <end position="125"/>
    </location>
</feature>
<comment type="function">
    <text evidence="1 2">Toxic component of a type II toxin-antitoxin (TA) system. An RNase (By similarity). Upon expression in M.smegmatis inhibits colony formation. Its toxic effect is neutralized by coexpression with cognate antitoxin VapB30.</text>
</comment>
<comment type="cofactor">
    <cofactor evidence="1">
        <name>Mg(2+)</name>
        <dbReference type="ChEBI" id="CHEBI:18420"/>
    </cofactor>
</comment>
<comment type="similarity">
    <text evidence="1">Belongs to the PINc/VapC protein family.</text>
</comment>
<reference key="1">
    <citation type="journal article" date="1998" name="Nature">
        <title>Deciphering the biology of Mycobacterium tuberculosis from the complete genome sequence.</title>
        <authorList>
            <person name="Cole S.T."/>
            <person name="Brosch R."/>
            <person name="Parkhill J."/>
            <person name="Garnier T."/>
            <person name="Churcher C.M."/>
            <person name="Harris D.E."/>
            <person name="Gordon S.V."/>
            <person name="Eiglmeier K."/>
            <person name="Gas S."/>
            <person name="Barry C.E. III"/>
            <person name="Tekaia F."/>
            <person name="Badcock K."/>
            <person name="Basham D."/>
            <person name="Brown D."/>
            <person name="Chillingworth T."/>
            <person name="Connor R."/>
            <person name="Davies R.M."/>
            <person name="Devlin K."/>
            <person name="Feltwell T."/>
            <person name="Gentles S."/>
            <person name="Hamlin N."/>
            <person name="Holroyd S."/>
            <person name="Hornsby T."/>
            <person name="Jagels K."/>
            <person name="Krogh A."/>
            <person name="McLean J."/>
            <person name="Moule S."/>
            <person name="Murphy L.D."/>
            <person name="Oliver S."/>
            <person name="Osborne J."/>
            <person name="Quail M.A."/>
            <person name="Rajandream M.A."/>
            <person name="Rogers J."/>
            <person name="Rutter S."/>
            <person name="Seeger K."/>
            <person name="Skelton S."/>
            <person name="Squares S."/>
            <person name="Squares R."/>
            <person name="Sulston J.E."/>
            <person name="Taylor K."/>
            <person name="Whitehead S."/>
            <person name="Barrell B.G."/>
        </authorList>
    </citation>
    <scope>NUCLEOTIDE SEQUENCE [LARGE SCALE GENOMIC DNA]</scope>
    <source>
        <strain>ATCC 25618 / H37Rv</strain>
    </source>
</reference>
<reference key="2">
    <citation type="journal article" date="2009" name="PLoS Genet.">
        <title>Comprehensive functional analysis of Mycobacterium tuberculosis toxin-antitoxin systems: implications for pathogenesis, stress responses, and evolution.</title>
        <authorList>
            <person name="Ramage H.R."/>
            <person name="Connolly L.E."/>
            <person name="Cox J.S."/>
        </authorList>
    </citation>
    <scope>EXPRESSION IN M.SMEGMATIS</scope>
    <scope>FUNCTION AS A TOXIN</scope>
    <source>
        <strain>ATCC 35801 / TMC 107 / Erdman</strain>
    </source>
</reference>
<reference key="3">
    <citation type="journal article" date="2011" name="Mol. Cell. Proteomics">
        <title>Proteogenomic analysis of Mycobacterium tuberculosis by high resolution mass spectrometry.</title>
        <authorList>
            <person name="Kelkar D.S."/>
            <person name="Kumar D."/>
            <person name="Kumar P."/>
            <person name="Balakrishnan L."/>
            <person name="Muthusamy B."/>
            <person name="Yadav A.K."/>
            <person name="Shrivastava P."/>
            <person name="Marimuthu A."/>
            <person name="Anand S."/>
            <person name="Sundaram H."/>
            <person name="Kingsbury R."/>
            <person name="Harsha H.C."/>
            <person name="Nair B."/>
            <person name="Prasad T.S."/>
            <person name="Chauhan D.S."/>
            <person name="Katoch K."/>
            <person name="Katoch V.M."/>
            <person name="Kumar P."/>
            <person name="Chaerkady R."/>
            <person name="Ramachandran S."/>
            <person name="Dash D."/>
            <person name="Pandey A."/>
        </authorList>
    </citation>
    <scope>IDENTIFICATION BY MASS SPECTROMETRY [LARGE SCALE ANALYSIS]</scope>
    <source>
        <strain>ATCC 25618 / H37Rv</strain>
    </source>
</reference>